<organism>
    <name type="scientific">Escherichia coli (strain K12)</name>
    <dbReference type="NCBI Taxonomy" id="83333"/>
    <lineage>
        <taxon>Bacteria</taxon>
        <taxon>Pseudomonadati</taxon>
        <taxon>Pseudomonadota</taxon>
        <taxon>Gammaproteobacteria</taxon>
        <taxon>Enterobacterales</taxon>
        <taxon>Enterobacteriaceae</taxon>
        <taxon>Escherichia</taxon>
    </lineage>
</organism>
<gene>
    <name type="primary">ytfR</name>
    <name type="synonym">ytfS</name>
    <name type="ordered locus">b4485</name>
    <name type="ordered locus">JW5752</name>
</gene>
<evidence type="ECO:0000255" key="1">
    <source>
        <dbReference type="PROSITE-ProRule" id="PRU00434"/>
    </source>
</evidence>
<evidence type="ECO:0000305" key="2"/>
<evidence type="ECO:0000305" key="3">
    <source>
    </source>
</evidence>
<proteinExistence type="evidence at protein level"/>
<sequence>MTTDQHQEILRTEGLSKFFPGVKALDNVDFSLRRGEIMALLGENGAGKSTLIKALTGVYHADRGTIWLEGQAISPKNTAHAQQLGIGTVYQEVNLLPNMSVADNLFIGREPKRFGLLRRKEMEKRATELMASYGFSLDVREPLNRFSVAMQQIVAICRAIDLSAKVLILDEPTASLDTQEVELLFDLMRQLRDRGVSLIFVTHFLDQVYQVSDRITVLRNGSFVGCRETCELPQIELVKMMLGRELDTHALQRAGRTLLSDKPVAAFKNYGKKGTIAPFDLEVRPGEIVGLAGLLGSGRTETAEVIFGIKPADSGTALIKGKPQNLRSPHQASVLGIGFCPEDRKTDGIIAAASVRENIILALQAQRGWLRPISRKEQQEIAERFIRQLGIRTPSTEQPIEFLSGGNQQKVLLSRWLLTRPQFLILDEPTRGIDVGAHAEIIRLIETLCADGLALLVISSELEELVGYADRVIIMRDRKQVAEIPLAELSVPAIMNAIAA</sequence>
<dbReference type="EC" id="7.5.2.9" evidence="3"/>
<dbReference type="EMBL" id="U14003">
    <property type="protein sequence ID" value="AAA97125.1"/>
    <property type="status" value="ALT_FRAME"/>
    <property type="molecule type" value="Genomic_DNA"/>
</dbReference>
<dbReference type="EMBL" id="U14003">
    <property type="protein sequence ID" value="AAA97126.1"/>
    <property type="status" value="ALT_FRAME"/>
    <property type="molecule type" value="Genomic_DNA"/>
</dbReference>
<dbReference type="EMBL" id="U00096">
    <property type="protein sequence ID" value="AAT48244.1"/>
    <property type="molecule type" value="Genomic_DNA"/>
</dbReference>
<dbReference type="EMBL" id="AP009048">
    <property type="protein sequence ID" value="BAE78229.1"/>
    <property type="molecule type" value="Genomic_DNA"/>
</dbReference>
<dbReference type="PIR" id="S56454">
    <property type="entry name" value="S56454"/>
</dbReference>
<dbReference type="PIR" id="S56455">
    <property type="entry name" value="S56455"/>
</dbReference>
<dbReference type="RefSeq" id="WP_000205805.1">
    <property type="nucleotide sequence ID" value="NZ_LN832404.1"/>
</dbReference>
<dbReference type="RefSeq" id="YP_026286.1">
    <property type="nucleotide sequence ID" value="NC_000913.3"/>
</dbReference>
<dbReference type="SMR" id="Q6BEX0"/>
<dbReference type="BioGRID" id="4261872">
    <property type="interactions" value="31"/>
</dbReference>
<dbReference type="ComplexPortal" id="CPX-4323">
    <property type="entry name" value="Galactofuranose ABC transporter complex"/>
</dbReference>
<dbReference type="DIP" id="DIP-48183N"/>
<dbReference type="FunCoup" id="Q6BEX0">
    <property type="interactions" value="184"/>
</dbReference>
<dbReference type="STRING" id="511145.b4485"/>
<dbReference type="TCDB" id="3.A.1.2.25">
    <property type="family name" value="the atp-binding cassette (abc) superfamily"/>
</dbReference>
<dbReference type="jPOST" id="Q6BEX0"/>
<dbReference type="PaxDb" id="511145-b4485"/>
<dbReference type="EnsemblBacteria" id="AAT48244">
    <property type="protein sequence ID" value="AAT48244"/>
    <property type="gene ID" value="b4485"/>
</dbReference>
<dbReference type="GeneID" id="2847725"/>
<dbReference type="KEGG" id="ecj:JW5752"/>
<dbReference type="KEGG" id="eco:b4485"/>
<dbReference type="KEGG" id="ecoc:C3026_22830"/>
<dbReference type="PATRIC" id="fig|1411691.4.peg.2473"/>
<dbReference type="EchoBASE" id="EB2410"/>
<dbReference type="eggNOG" id="COG1129">
    <property type="taxonomic scope" value="Bacteria"/>
</dbReference>
<dbReference type="HOGENOM" id="CLU_000604_92_3_6"/>
<dbReference type="InParanoid" id="Q6BEX0"/>
<dbReference type="OMA" id="IMRDRQQ"/>
<dbReference type="OrthoDB" id="9776369at2"/>
<dbReference type="PhylomeDB" id="Q6BEX0"/>
<dbReference type="BioCyc" id="EcoCyc:YTFR-MONOMER"/>
<dbReference type="BioCyc" id="MetaCyc:YTFR-MONOMER"/>
<dbReference type="PRO" id="PR:Q6BEX0"/>
<dbReference type="Proteomes" id="UP000000625">
    <property type="component" value="Chromosome"/>
</dbReference>
<dbReference type="GO" id="GO:0055052">
    <property type="term" value="C:ATP-binding cassette (ABC) transporter complex, substrate-binding subunit-containing"/>
    <property type="evidence" value="ECO:0000303"/>
    <property type="project" value="ComplexPortal"/>
</dbReference>
<dbReference type="GO" id="GO:0103116">
    <property type="term" value="F:ABC-type D-galactofuranose transporter"/>
    <property type="evidence" value="ECO:0007669"/>
    <property type="project" value="UniProtKB-EC"/>
</dbReference>
<dbReference type="GO" id="GO:0005524">
    <property type="term" value="F:ATP binding"/>
    <property type="evidence" value="ECO:0000247"/>
    <property type="project" value="EcoCyc"/>
</dbReference>
<dbReference type="GO" id="GO:0016887">
    <property type="term" value="F:ATP hydrolysis activity"/>
    <property type="evidence" value="ECO:0007669"/>
    <property type="project" value="InterPro"/>
</dbReference>
<dbReference type="GO" id="GO:0042626">
    <property type="term" value="F:ATPase-coupled transmembrane transporter activity"/>
    <property type="evidence" value="ECO:0000247"/>
    <property type="project" value="EcoCyc"/>
</dbReference>
<dbReference type="GO" id="GO:0140271">
    <property type="term" value="P:hexose import across plasma membrane"/>
    <property type="evidence" value="ECO:0000303"/>
    <property type="project" value="ComplexPortal"/>
</dbReference>
<dbReference type="CDD" id="cd03216">
    <property type="entry name" value="ABC_Carb_Monos_I"/>
    <property type="match status" value="1"/>
</dbReference>
<dbReference type="CDD" id="cd03215">
    <property type="entry name" value="ABC_Carb_Monos_II"/>
    <property type="match status" value="1"/>
</dbReference>
<dbReference type="FunFam" id="3.40.50.300:FF:000127">
    <property type="entry name" value="Ribose import ATP-binding protein RbsA"/>
    <property type="match status" value="1"/>
</dbReference>
<dbReference type="Gene3D" id="3.40.50.300">
    <property type="entry name" value="P-loop containing nucleotide triphosphate hydrolases"/>
    <property type="match status" value="2"/>
</dbReference>
<dbReference type="InterPro" id="IPR003593">
    <property type="entry name" value="AAA+_ATPase"/>
</dbReference>
<dbReference type="InterPro" id="IPR050107">
    <property type="entry name" value="ABC_carbohydrate_import_ATPase"/>
</dbReference>
<dbReference type="InterPro" id="IPR003439">
    <property type="entry name" value="ABC_transporter-like_ATP-bd"/>
</dbReference>
<dbReference type="InterPro" id="IPR017871">
    <property type="entry name" value="ABC_transporter-like_CS"/>
</dbReference>
<dbReference type="InterPro" id="IPR027417">
    <property type="entry name" value="P-loop_NTPase"/>
</dbReference>
<dbReference type="InterPro" id="IPR049716">
    <property type="entry name" value="YtfR-like"/>
</dbReference>
<dbReference type="NCBIfam" id="NF041861">
    <property type="entry name" value="YtfR_transport"/>
    <property type="match status" value="1"/>
</dbReference>
<dbReference type="PANTHER" id="PTHR43790">
    <property type="entry name" value="CARBOHYDRATE TRANSPORT ATP-BINDING PROTEIN MG119-RELATED"/>
    <property type="match status" value="1"/>
</dbReference>
<dbReference type="PANTHER" id="PTHR43790:SF9">
    <property type="entry name" value="GALACTOFURANOSE TRANSPORTER ATP-BINDING PROTEIN YTFR"/>
    <property type="match status" value="1"/>
</dbReference>
<dbReference type="Pfam" id="PF00005">
    <property type="entry name" value="ABC_tran"/>
    <property type="match status" value="2"/>
</dbReference>
<dbReference type="SMART" id="SM00382">
    <property type="entry name" value="AAA"/>
    <property type="match status" value="2"/>
</dbReference>
<dbReference type="SUPFAM" id="SSF52540">
    <property type="entry name" value="P-loop containing nucleoside triphosphate hydrolases"/>
    <property type="match status" value="2"/>
</dbReference>
<dbReference type="PROSITE" id="PS00211">
    <property type="entry name" value="ABC_TRANSPORTER_1"/>
    <property type="match status" value="1"/>
</dbReference>
<dbReference type="PROSITE" id="PS50893">
    <property type="entry name" value="ABC_TRANSPORTER_2"/>
    <property type="match status" value="2"/>
</dbReference>
<protein>
    <recommendedName>
        <fullName evidence="2">Galactofuranose transporter ATP-binding protein YtfR</fullName>
        <ecNumber evidence="3">7.5.2.9</ecNumber>
    </recommendedName>
</protein>
<keyword id="KW-0067">ATP-binding</keyword>
<keyword id="KW-0997">Cell inner membrane</keyword>
<keyword id="KW-1003">Cell membrane</keyword>
<keyword id="KW-0472">Membrane</keyword>
<keyword id="KW-0547">Nucleotide-binding</keyword>
<keyword id="KW-1185">Reference proteome</keyword>
<keyword id="KW-0677">Repeat</keyword>
<keyword id="KW-0762">Sugar transport</keyword>
<keyword id="KW-1278">Translocase</keyword>
<keyword id="KW-0813">Transport</keyword>
<feature type="chain" id="PRO_0000093175" description="Galactofuranose transporter ATP-binding protein YtfR">
    <location>
        <begin position="1"/>
        <end position="500"/>
    </location>
</feature>
<feature type="domain" description="ABC transporter 1" evidence="1">
    <location>
        <begin position="10"/>
        <end position="245"/>
    </location>
</feature>
<feature type="domain" description="ABC transporter 2" evidence="1">
    <location>
        <begin position="259"/>
        <end position="497"/>
    </location>
</feature>
<feature type="binding site" evidence="1">
    <location>
        <begin position="42"/>
        <end position="49"/>
    </location>
    <ligand>
        <name>ATP</name>
        <dbReference type="ChEBI" id="CHEBI:30616"/>
    </ligand>
</feature>
<comment type="function">
    <text evidence="2 3">Part of the ABC transporter complex YtfQRT-YjfF involved in galactofuranose transport (Probable). Responsible for energy coupling to the transport system (Probable).</text>
</comment>
<comment type="catalytic activity">
    <reaction evidence="3">
        <text>D-galactofuranose(out) + ATP + H2O = D-galactofuranose(in) + ADP + phosphate + H(+)</text>
        <dbReference type="Rhea" id="RHEA:61716"/>
        <dbReference type="ChEBI" id="CHEBI:15377"/>
        <dbReference type="ChEBI" id="CHEBI:15378"/>
        <dbReference type="ChEBI" id="CHEBI:30616"/>
        <dbReference type="ChEBI" id="CHEBI:43474"/>
        <dbReference type="ChEBI" id="CHEBI:143624"/>
        <dbReference type="ChEBI" id="CHEBI:456216"/>
        <dbReference type="EC" id="7.5.2.9"/>
    </reaction>
</comment>
<comment type="subunit">
    <text evidence="3">The complex is composed of two ATP-binding proteins (YtfR), two transmembrane proteins (YtfT and YjfF) and a solute-binding protein (YtfQ).</text>
</comment>
<comment type="subcellular location">
    <subcellularLocation>
        <location evidence="2">Cell inner membrane</location>
        <topology evidence="2">Peripheral membrane protein</topology>
    </subcellularLocation>
</comment>
<comment type="similarity">
    <text evidence="2">Belongs to the ABC transporter superfamily.</text>
</comment>
<comment type="sequence caution" evidence="2">
    <conflict type="frameshift">
        <sequence resource="EMBL-CDS" id="AAA97126"/>
    </conflict>
</comment>
<name>YTFR_ECOLI</name>
<reference key="1">
    <citation type="journal article" date="1995" name="Nucleic Acids Res.">
        <title>Analysis of the Escherichia coli genome VI: DNA sequence of the region from 92.8 through 100 minutes.</title>
        <authorList>
            <person name="Burland V.D."/>
            <person name="Plunkett G. III"/>
            <person name="Sofia H.J."/>
            <person name="Daniels D.L."/>
            <person name="Blattner F.R."/>
        </authorList>
    </citation>
    <scope>NUCLEOTIDE SEQUENCE [LARGE SCALE GENOMIC DNA]</scope>
    <source>
        <strain>K12 / MG1655 / ATCC 47076</strain>
    </source>
</reference>
<reference key="2">
    <citation type="journal article" date="1997" name="Science">
        <title>The complete genome sequence of Escherichia coli K-12.</title>
        <authorList>
            <person name="Blattner F.R."/>
            <person name="Plunkett G. III"/>
            <person name="Bloch C.A."/>
            <person name="Perna N.T."/>
            <person name="Burland V."/>
            <person name="Riley M."/>
            <person name="Collado-Vides J."/>
            <person name="Glasner J.D."/>
            <person name="Rode C.K."/>
            <person name="Mayhew G.F."/>
            <person name="Gregor J."/>
            <person name="Davis N.W."/>
            <person name="Kirkpatrick H.A."/>
            <person name="Goeden M.A."/>
            <person name="Rose D.J."/>
            <person name="Mau B."/>
            <person name="Shao Y."/>
        </authorList>
    </citation>
    <scope>NUCLEOTIDE SEQUENCE [LARGE SCALE GENOMIC DNA]</scope>
    <source>
        <strain>K12 / MG1655 / ATCC 47076</strain>
    </source>
</reference>
<reference key="3">
    <citation type="journal article" date="2006" name="Nucleic Acids Res.">
        <title>Escherichia coli K-12: a cooperatively developed annotation snapshot -- 2005.</title>
        <authorList>
            <person name="Riley M."/>
            <person name="Abe T."/>
            <person name="Arnaud M.B."/>
            <person name="Berlyn M.K.B."/>
            <person name="Blattner F.R."/>
            <person name="Chaudhuri R.R."/>
            <person name="Glasner J.D."/>
            <person name="Horiuchi T."/>
            <person name="Keseler I.M."/>
            <person name="Kosuge T."/>
            <person name="Mori H."/>
            <person name="Perna N.T."/>
            <person name="Plunkett G. III"/>
            <person name="Rudd K.E."/>
            <person name="Serres M.H."/>
            <person name="Thomas G.H."/>
            <person name="Thomson N.R."/>
            <person name="Wishart D."/>
            <person name="Wanner B.L."/>
        </authorList>
    </citation>
    <scope>SEQUENCE REVISION</scope>
</reference>
<reference key="4">
    <citation type="journal article" date="2006" name="Mol. Syst. Biol.">
        <title>Highly accurate genome sequences of Escherichia coli K-12 strains MG1655 and W3110.</title>
        <authorList>
            <person name="Hayashi K."/>
            <person name="Morooka N."/>
            <person name="Yamamoto Y."/>
            <person name="Fujita K."/>
            <person name="Isono K."/>
            <person name="Choi S."/>
            <person name="Ohtsubo E."/>
            <person name="Baba T."/>
            <person name="Wanner B.L."/>
            <person name="Mori H."/>
            <person name="Horiuchi T."/>
        </authorList>
    </citation>
    <scope>NUCLEOTIDE SEQUENCE [LARGE SCALE GENOMIC DNA]</scope>
    <source>
        <strain>K12 / W3110 / ATCC 27325 / DSM 5911</strain>
    </source>
</reference>
<reference key="5">
    <citation type="journal article" date="2009" name="J. Biol. Chem.">
        <title>Furanose-specific sugar transport: characterization of a bacterial galactofuranose-binding protein.</title>
        <authorList>
            <person name="Horler R.S."/>
            <person name="Muller A."/>
            <person name="Williamson D.C."/>
            <person name="Potts J.R."/>
            <person name="Wilson K.S."/>
            <person name="Thomas G.H."/>
        </authorList>
    </citation>
    <scope>FUNCTION</scope>
    <scope>CATALYTIC ACTIVITY</scope>
    <scope>SUBUNIT</scope>
    <source>
        <strain>K12</strain>
    </source>
</reference>
<accession>Q6BEX0</accession>
<accession>P39326</accession>
<accession>P39327</accession>
<accession>Q2M677</accession>